<organism>
    <name type="scientific">Corynebacterium glutamicum (strain ATCC 13032 / DSM 20300 / JCM 1318 / BCRC 11384 / CCUG 27702 / LMG 3730 / NBRC 12168 / NCIMB 10025 / NRRL B-2784 / 534)</name>
    <dbReference type="NCBI Taxonomy" id="196627"/>
    <lineage>
        <taxon>Bacteria</taxon>
        <taxon>Bacillati</taxon>
        <taxon>Actinomycetota</taxon>
        <taxon>Actinomycetes</taxon>
        <taxon>Mycobacteriales</taxon>
        <taxon>Corynebacteriaceae</taxon>
        <taxon>Corynebacterium</taxon>
    </lineage>
</organism>
<evidence type="ECO:0000250" key="1">
    <source>
        <dbReference type="UniProtKB" id="P9WN05"/>
    </source>
</evidence>
<evidence type="ECO:0000255" key="2"/>
<evidence type="ECO:0000269" key="3">
    <source>
    </source>
</evidence>
<evidence type="ECO:0000305" key="4"/>
<evidence type="ECO:0000312" key="5">
    <source>
        <dbReference type="EMBL" id="BAB98283.1"/>
    </source>
</evidence>
<evidence type="ECO:0000312" key="6">
    <source>
        <dbReference type="EMBL" id="CAF19596.1"/>
    </source>
</evidence>
<name>PMT_CORGL</name>
<protein>
    <recommendedName>
        <fullName evidence="1">Polyprenol-phosphate-mannose--protein mannosyltransferase</fullName>
        <ecNumber evidence="1">2.4.1.-</ecNumber>
    </recommendedName>
    <alternativeName>
        <fullName evidence="1">Protein O-mannosyltransferase</fullName>
        <shortName evidence="1">PMT</shortName>
    </alternativeName>
</protein>
<accession>Q8NRZ6</accession>
<accession>Q6M6Q4</accession>
<proteinExistence type="inferred from homology"/>
<feature type="chain" id="PRO_0000421157" description="Polyprenol-phosphate-mannose--protein mannosyltransferase">
    <location>
        <begin position="1"/>
        <end position="520"/>
    </location>
</feature>
<feature type="transmembrane region" description="Helical" evidence="2">
    <location>
        <begin position="38"/>
        <end position="58"/>
    </location>
</feature>
<feature type="transmembrane region" description="Helical" evidence="2">
    <location>
        <begin position="119"/>
        <end position="139"/>
    </location>
</feature>
<feature type="transmembrane region" description="Helical" evidence="2">
    <location>
        <begin position="145"/>
        <end position="165"/>
    </location>
</feature>
<feature type="transmembrane region" description="Helical" evidence="2">
    <location>
        <begin position="168"/>
        <end position="188"/>
    </location>
</feature>
<feature type="transmembrane region" description="Helical" evidence="2">
    <location>
        <begin position="237"/>
        <end position="257"/>
    </location>
</feature>
<feature type="transmembrane region" description="Helical" evidence="2">
    <location>
        <begin position="274"/>
        <end position="294"/>
    </location>
</feature>
<feature type="transmembrane region" description="Helical" evidence="2">
    <location>
        <begin position="388"/>
        <end position="408"/>
    </location>
</feature>
<feature type="transmembrane region" description="Helical" evidence="2">
    <location>
        <begin position="418"/>
        <end position="438"/>
    </location>
</feature>
<feature type="transmembrane region" description="Helical" evidence="2">
    <location>
        <begin position="441"/>
        <end position="461"/>
    </location>
</feature>
<feature type="transmembrane region" description="Helical" evidence="2">
    <location>
        <begin position="485"/>
        <end position="505"/>
    </location>
</feature>
<sequence length="520" mass="58734">MSQALPVRDQGRDQGIFAGTLPPAPPKFKWTRLDTYTWAIIAVFALVTRFTGLSSATASGTPVFDEKHYVPQAWDMVRSWINPITGGIESNPGYGLVVHPPLAKQLEALGEWVFGYTPLGWRIMVAIFGTLTIFAIMAIARRLSGSTMVTFIAGILALADGVLLVSSRFGMLDIFLVFFITAAAWALIRDHQQMHQRLNDLLLTNGQITKDFGPRFGFRWWRFTTGVFLGLALSVKWSGLYYIAFFGLTSVFLDLWLRKRYGVRRYVTGTLKNDVIPALGSLVIIPALLYIWSWRAWFASETSVYRHAKTDGTITEDSILQLFPESIAGWIHYHISVLEFHGSLTTSSGHSHPWDSKPWAWLVSGRPILYFSSTDISCDVGGTCRRMIYLFGTPAIWWLTVPVILWALWSFFARRSRGYVVPLVAFAAGFLPWLAAYDRQMYFFYATALVPFTIIMLALACGELWGRGKMTPTGLTRGSMAVVTYISLVVMMFLAFSPLFYGFVIPDYVYESLMWFPSWR</sequence>
<comment type="function">
    <text evidence="1">Protein O-mannosyltransferase that catalyzes the transfer of a single mannose residue from a polyprenol phospho-mannosyl lipidic donor to the hydroxyl group of selected serine and threonine residues in acceptor proteins.</text>
</comment>
<comment type="pathway">
    <text evidence="1">Protein modification; protein glycosylation.</text>
</comment>
<comment type="subcellular location">
    <subcellularLocation>
        <location evidence="1">Cell membrane</location>
        <topology evidence="2">Multi-pass membrane protein</topology>
    </subcellularLocation>
</comment>
<comment type="disruption phenotype">
    <text evidence="3">Loss of protein glycosylation.</text>
</comment>
<comment type="similarity">
    <text evidence="4">Belongs to the glycosyltransferase 39 family.</text>
</comment>
<gene>
    <name type="primary">pmt</name>
    <name evidence="5" type="ordered locus">Cgl0890</name>
    <name evidence="6" type="ordered locus">cg1014</name>
</gene>
<dbReference type="EC" id="2.4.1.-" evidence="1"/>
<dbReference type="EMBL" id="BA000036">
    <property type="protein sequence ID" value="BAB98283.1"/>
    <property type="molecule type" value="Genomic_DNA"/>
</dbReference>
<dbReference type="EMBL" id="BX927150">
    <property type="protein sequence ID" value="CAF19596.1"/>
    <property type="molecule type" value="Genomic_DNA"/>
</dbReference>
<dbReference type="RefSeq" id="NP_600117.1">
    <property type="nucleotide sequence ID" value="NC_003450.3"/>
</dbReference>
<dbReference type="RefSeq" id="WP_011013949.1">
    <property type="nucleotide sequence ID" value="NC_006958.1"/>
</dbReference>
<dbReference type="SMR" id="Q8NRZ6"/>
<dbReference type="STRING" id="196627.cg1014"/>
<dbReference type="CAZy" id="GT39">
    <property type="family name" value="Glycosyltransferase Family 39"/>
</dbReference>
<dbReference type="DNASU" id="1018883"/>
<dbReference type="KEGG" id="cgb:cg1014"/>
<dbReference type="KEGG" id="cgl:Cgl0890"/>
<dbReference type="PATRIC" id="fig|196627.13.peg.873"/>
<dbReference type="eggNOG" id="COG1928">
    <property type="taxonomic scope" value="Bacteria"/>
</dbReference>
<dbReference type="HOGENOM" id="CLU_021079_1_0_11"/>
<dbReference type="OrthoDB" id="9776737at2"/>
<dbReference type="BioCyc" id="CORYNE:G18NG-10460-MONOMER"/>
<dbReference type="UniPathway" id="UPA00378"/>
<dbReference type="Proteomes" id="UP000000582">
    <property type="component" value="Chromosome"/>
</dbReference>
<dbReference type="Proteomes" id="UP000001009">
    <property type="component" value="Chromosome"/>
</dbReference>
<dbReference type="GO" id="GO:0005886">
    <property type="term" value="C:plasma membrane"/>
    <property type="evidence" value="ECO:0007669"/>
    <property type="project" value="UniProtKB-SubCell"/>
</dbReference>
<dbReference type="GO" id="GO:0004169">
    <property type="term" value="F:dolichyl-phosphate-mannose-protein mannosyltransferase activity"/>
    <property type="evidence" value="ECO:0007669"/>
    <property type="project" value="UniProtKB-EC"/>
</dbReference>
<dbReference type="InterPro" id="IPR027005">
    <property type="entry name" value="GlyclTrfase_39-like"/>
</dbReference>
<dbReference type="InterPro" id="IPR003342">
    <property type="entry name" value="Glyco_trans_39/83"/>
</dbReference>
<dbReference type="InterPro" id="IPR032421">
    <property type="entry name" value="PMT_4TMC"/>
</dbReference>
<dbReference type="PANTHER" id="PTHR10050">
    <property type="entry name" value="DOLICHYL-PHOSPHATE-MANNOSE--PROTEIN MANNOSYLTRANSFERASE"/>
    <property type="match status" value="1"/>
</dbReference>
<dbReference type="PANTHER" id="PTHR10050:SF46">
    <property type="entry name" value="PROTEIN O-MANNOSYL-TRANSFERASE 2"/>
    <property type="match status" value="1"/>
</dbReference>
<dbReference type="Pfam" id="PF02366">
    <property type="entry name" value="PMT"/>
    <property type="match status" value="1"/>
</dbReference>
<dbReference type="Pfam" id="PF16192">
    <property type="entry name" value="PMT_4TMC"/>
    <property type="match status" value="1"/>
</dbReference>
<keyword id="KW-1003">Cell membrane</keyword>
<keyword id="KW-0328">Glycosyltransferase</keyword>
<keyword id="KW-0472">Membrane</keyword>
<keyword id="KW-1185">Reference proteome</keyword>
<keyword id="KW-0808">Transferase</keyword>
<keyword id="KW-0812">Transmembrane</keyword>
<keyword id="KW-1133">Transmembrane helix</keyword>
<reference evidence="5" key="1">
    <citation type="journal article" date="2003" name="Appl. Microbiol. Biotechnol.">
        <title>The Corynebacterium glutamicum genome: features and impacts on biotechnological processes.</title>
        <authorList>
            <person name="Ikeda M."/>
            <person name="Nakagawa S."/>
        </authorList>
    </citation>
    <scope>NUCLEOTIDE SEQUENCE [LARGE SCALE GENOMIC DNA]</scope>
    <source>
        <strain>ATCC 13032 / DSM 20300 / JCM 1318 / BCRC 11384 / CCUG 27702 / LMG 3730 / NBRC 12168 / NCIMB 10025 / NRRL B-2784 / 534</strain>
    </source>
</reference>
<reference evidence="6" key="2">
    <citation type="journal article" date="2003" name="J. Biotechnol.">
        <title>The complete Corynebacterium glutamicum ATCC 13032 genome sequence and its impact on the production of L-aspartate-derived amino acids and vitamins.</title>
        <authorList>
            <person name="Kalinowski J."/>
            <person name="Bathe B."/>
            <person name="Bartels D."/>
            <person name="Bischoff N."/>
            <person name="Bott M."/>
            <person name="Burkovski A."/>
            <person name="Dusch N."/>
            <person name="Eggeling L."/>
            <person name="Eikmanns B.J."/>
            <person name="Gaigalat L."/>
            <person name="Goesmann A."/>
            <person name="Hartmann M."/>
            <person name="Huthmacher K."/>
            <person name="Kraemer R."/>
            <person name="Linke B."/>
            <person name="McHardy A.C."/>
            <person name="Meyer F."/>
            <person name="Moeckel B."/>
            <person name="Pfefferle W."/>
            <person name="Puehler A."/>
            <person name="Rey D.A."/>
            <person name="Rueckert C."/>
            <person name="Rupp O."/>
            <person name="Sahm H."/>
            <person name="Wendisch V.F."/>
            <person name="Wiegraebe I."/>
            <person name="Tauch A."/>
        </authorList>
    </citation>
    <scope>NUCLEOTIDE SEQUENCE [LARGE SCALE GENOMIC DNA]</scope>
    <source>
        <strain>ATCC 13032 / DSM 20300 / JCM 1318 / BCRC 11384 / CCUG 27702 / LMG 3730 / NBRC 12168 / NCIMB 10025 / NRRL B-2784 / 534</strain>
    </source>
</reference>
<reference key="3">
    <citation type="journal article" date="2006" name="FEMS Microbiol. Lett.">
        <title>The Corynebacterium glutamicum gene pmt encoding a glycosyltransferase related to eukaryotic protein-O-mannosyltransferases is essential for glycosylation of the resuscitation promoting factor (Rpf2) and other secreted proteins.</title>
        <authorList>
            <person name="Mahne M."/>
            <person name="Tauch A."/>
            <person name="Puhler A."/>
            <person name="Kalinowski J."/>
        </authorList>
    </citation>
    <scope>DISRUPTION PHENOTYPE</scope>
    <source>
        <strain>ATCC 13032 / DSM 20300 / JCM 1318 / BCRC 11384 / CCUG 27702 / LMG 3730 / NBRC 12168 / NCIMB 10025 / NRRL B-2784 / 534</strain>
    </source>
</reference>